<protein>
    <recommendedName>
        <fullName evidence="1">Chaperone protein DnaJ</fullName>
    </recommendedName>
</protein>
<organism>
    <name type="scientific">Vibrio atlanticus (strain LGP32)</name>
    <name type="common">Vibrio splendidus (strain Mel32)</name>
    <dbReference type="NCBI Taxonomy" id="575788"/>
    <lineage>
        <taxon>Bacteria</taxon>
        <taxon>Pseudomonadati</taxon>
        <taxon>Pseudomonadota</taxon>
        <taxon>Gammaproteobacteria</taxon>
        <taxon>Vibrionales</taxon>
        <taxon>Vibrionaceae</taxon>
        <taxon>Vibrio</taxon>
    </lineage>
</organism>
<dbReference type="EMBL" id="FM954972">
    <property type="protein sequence ID" value="CAV17646.1"/>
    <property type="molecule type" value="Genomic_DNA"/>
</dbReference>
<dbReference type="SMR" id="B7VJX0"/>
<dbReference type="STRING" id="575788.VS_0652"/>
<dbReference type="KEGG" id="vsp:VS_0652"/>
<dbReference type="eggNOG" id="COG0484">
    <property type="taxonomic scope" value="Bacteria"/>
</dbReference>
<dbReference type="HOGENOM" id="CLU_017633_0_7_6"/>
<dbReference type="Proteomes" id="UP000009100">
    <property type="component" value="Chromosome 1"/>
</dbReference>
<dbReference type="GO" id="GO:0005737">
    <property type="term" value="C:cytoplasm"/>
    <property type="evidence" value="ECO:0007669"/>
    <property type="project" value="UniProtKB-SubCell"/>
</dbReference>
<dbReference type="GO" id="GO:0005524">
    <property type="term" value="F:ATP binding"/>
    <property type="evidence" value="ECO:0007669"/>
    <property type="project" value="InterPro"/>
</dbReference>
<dbReference type="GO" id="GO:0031072">
    <property type="term" value="F:heat shock protein binding"/>
    <property type="evidence" value="ECO:0007669"/>
    <property type="project" value="InterPro"/>
</dbReference>
<dbReference type="GO" id="GO:0051082">
    <property type="term" value="F:unfolded protein binding"/>
    <property type="evidence" value="ECO:0007669"/>
    <property type="project" value="UniProtKB-UniRule"/>
</dbReference>
<dbReference type="GO" id="GO:0008270">
    <property type="term" value="F:zinc ion binding"/>
    <property type="evidence" value="ECO:0007669"/>
    <property type="project" value="UniProtKB-UniRule"/>
</dbReference>
<dbReference type="GO" id="GO:0051085">
    <property type="term" value="P:chaperone cofactor-dependent protein refolding"/>
    <property type="evidence" value="ECO:0007669"/>
    <property type="project" value="TreeGrafter"/>
</dbReference>
<dbReference type="GO" id="GO:0006260">
    <property type="term" value="P:DNA replication"/>
    <property type="evidence" value="ECO:0007669"/>
    <property type="project" value="UniProtKB-KW"/>
</dbReference>
<dbReference type="GO" id="GO:0042026">
    <property type="term" value="P:protein refolding"/>
    <property type="evidence" value="ECO:0007669"/>
    <property type="project" value="TreeGrafter"/>
</dbReference>
<dbReference type="GO" id="GO:0009408">
    <property type="term" value="P:response to heat"/>
    <property type="evidence" value="ECO:0007669"/>
    <property type="project" value="InterPro"/>
</dbReference>
<dbReference type="CDD" id="cd06257">
    <property type="entry name" value="DnaJ"/>
    <property type="match status" value="1"/>
</dbReference>
<dbReference type="CDD" id="cd10747">
    <property type="entry name" value="DnaJ_C"/>
    <property type="match status" value="1"/>
</dbReference>
<dbReference type="CDD" id="cd10719">
    <property type="entry name" value="DnaJ_zf"/>
    <property type="match status" value="1"/>
</dbReference>
<dbReference type="FunFam" id="1.10.287.110:FF:000003">
    <property type="entry name" value="Molecular chaperone DnaJ"/>
    <property type="match status" value="1"/>
</dbReference>
<dbReference type="FunFam" id="2.10.230.10:FF:000002">
    <property type="entry name" value="Molecular chaperone DnaJ"/>
    <property type="match status" value="1"/>
</dbReference>
<dbReference type="FunFam" id="2.60.260.20:FF:000004">
    <property type="entry name" value="Molecular chaperone DnaJ"/>
    <property type="match status" value="1"/>
</dbReference>
<dbReference type="Gene3D" id="1.10.287.110">
    <property type="entry name" value="DnaJ domain"/>
    <property type="match status" value="1"/>
</dbReference>
<dbReference type="Gene3D" id="2.10.230.10">
    <property type="entry name" value="Heat shock protein DnaJ, cysteine-rich domain"/>
    <property type="match status" value="1"/>
</dbReference>
<dbReference type="Gene3D" id="2.60.260.20">
    <property type="entry name" value="Urease metallochaperone UreE, N-terminal domain"/>
    <property type="match status" value="2"/>
</dbReference>
<dbReference type="HAMAP" id="MF_01152">
    <property type="entry name" value="DnaJ"/>
    <property type="match status" value="1"/>
</dbReference>
<dbReference type="InterPro" id="IPR012724">
    <property type="entry name" value="DnaJ"/>
</dbReference>
<dbReference type="InterPro" id="IPR002939">
    <property type="entry name" value="DnaJ_C"/>
</dbReference>
<dbReference type="InterPro" id="IPR001623">
    <property type="entry name" value="DnaJ_domain"/>
</dbReference>
<dbReference type="InterPro" id="IPR018253">
    <property type="entry name" value="DnaJ_domain_CS"/>
</dbReference>
<dbReference type="InterPro" id="IPR008971">
    <property type="entry name" value="HSP40/DnaJ_pept-bd"/>
</dbReference>
<dbReference type="InterPro" id="IPR001305">
    <property type="entry name" value="HSP_DnaJ_Cys-rich_dom"/>
</dbReference>
<dbReference type="InterPro" id="IPR036410">
    <property type="entry name" value="HSP_DnaJ_Cys-rich_dom_sf"/>
</dbReference>
<dbReference type="InterPro" id="IPR036869">
    <property type="entry name" value="J_dom_sf"/>
</dbReference>
<dbReference type="NCBIfam" id="TIGR02349">
    <property type="entry name" value="DnaJ_bact"/>
    <property type="match status" value="1"/>
</dbReference>
<dbReference type="NCBIfam" id="NF008035">
    <property type="entry name" value="PRK10767.1"/>
    <property type="match status" value="1"/>
</dbReference>
<dbReference type="PANTHER" id="PTHR43096:SF48">
    <property type="entry name" value="CHAPERONE PROTEIN DNAJ"/>
    <property type="match status" value="1"/>
</dbReference>
<dbReference type="PANTHER" id="PTHR43096">
    <property type="entry name" value="DNAJ HOMOLOG 1, MITOCHONDRIAL-RELATED"/>
    <property type="match status" value="1"/>
</dbReference>
<dbReference type="Pfam" id="PF00226">
    <property type="entry name" value="DnaJ"/>
    <property type="match status" value="1"/>
</dbReference>
<dbReference type="Pfam" id="PF01556">
    <property type="entry name" value="DnaJ_C"/>
    <property type="match status" value="1"/>
</dbReference>
<dbReference type="Pfam" id="PF00684">
    <property type="entry name" value="DnaJ_CXXCXGXG"/>
    <property type="match status" value="1"/>
</dbReference>
<dbReference type="PRINTS" id="PR00625">
    <property type="entry name" value="JDOMAIN"/>
</dbReference>
<dbReference type="SMART" id="SM00271">
    <property type="entry name" value="DnaJ"/>
    <property type="match status" value="1"/>
</dbReference>
<dbReference type="SUPFAM" id="SSF46565">
    <property type="entry name" value="Chaperone J-domain"/>
    <property type="match status" value="1"/>
</dbReference>
<dbReference type="SUPFAM" id="SSF57938">
    <property type="entry name" value="DnaJ/Hsp40 cysteine-rich domain"/>
    <property type="match status" value="1"/>
</dbReference>
<dbReference type="SUPFAM" id="SSF49493">
    <property type="entry name" value="HSP40/DnaJ peptide-binding domain"/>
    <property type="match status" value="2"/>
</dbReference>
<dbReference type="PROSITE" id="PS00636">
    <property type="entry name" value="DNAJ_1"/>
    <property type="match status" value="1"/>
</dbReference>
<dbReference type="PROSITE" id="PS50076">
    <property type="entry name" value="DNAJ_2"/>
    <property type="match status" value="1"/>
</dbReference>
<dbReference type="PROSITE" id="PS51188">
    <property type="entry name" value="ZF_CR"/>
    <property type="match status" value="1"/>
</dbReference>
<feature type="chain" id="PRO_1000164284" description="Chaperone protein DnaJ">
    <location>
        <begin position="1"/>
        <end position="381"/>
    </location>
</feature>
<feature type="domain" description="J" evidence="1">
    <location>
        <begin position="5"/>
        <end position="70"/>
    </location>
</feature>
<feature type="repeat" description="CXXCXGXG motif">
    <location>
        <begin position="149"/>
        <end position="156"/>
    </location>
</feature>
<feature type="repeat" description="CXXCXGXG motif">
    <location>
        <begin position="166"/>
        <end position="173"/>
    </location>
</feature>
<feature type="repeat" description="CXXCXGXG motif">
    <location>
        <begin position="188"/>
        <end position="195"/>
    </location>
</feature>
<feature type="repeat" description="CXXCXGXG motif">
    <location>
        <begin position="202"/>
        <end position="209"/>
    </location>
</feature>
<feature type="zinc finger region" description="CR-type" evidence="1">
    <location>
        <begin position="136"/>
        <end position="214"/>
    </location>
</feature>
<feature type="binding site" evidence="1">
    <location>
        <position position="149"/>
    </location>
    <ligand>
        <name>Zn(2+)</name>
        <dbReference type="ChEBI" id="CHEBI:29105"/>
        <label>1</label>
    </ligand>
</feature>
<feature type="binding site" evidence="1">
    <location>
        <position position="152"/>
    </location>
    <ligand>
        <name>Zn(2+)</name>
        <dbReference type="ChEBI" id="CHEBI:29105"/>
        <label>1</label>
    </ligand>
</feature>
<feature type="binding site" evidence="1">
    <location>
        <position position="166"/>
    </location>
    <ligand>
        <name>Zn(2+)</name>
        <dbReference type="ChEBI" id="CHEBI:29105"/>
        <label>2</label>
    </ligand>
</feature>
<feature type="binding site" evidence="1">
    <location>
        <position position="169"/>
    </location>
    <ligand>
        <name>Zn(2+)</name>
        <dbReference type="ChEBI" id="CHEBI:29105"/>
        <label>2</label>
    </ligand>
</feature>
<feature type="binding site" evidence="1">
    <location>
        <position position="188"/>
    </location>
    <ligand>
        <name>Zn(2+)</name>
        <dbReference type="ChEBI" id="CHEBI:29105"/>
        <label>2</label>
    </ligand>
</feature>
<feature type="binding site" evidence="1">
    <location>
        <position position="191"/>
    </location>
    <ligand>
        <name>Zn(2+)</name>
        <dbReference type="ChEBI" id="CHEBI:29105"/>
        <label>2</label>
    </ligand>
</feature>
<feature type="binding site" evidence="1">
    <location>
        <position position="202"/>
    </location>
    <ligand>
        <name>Zn(2+)</name>
        <dbReference type="ChEBI" id="CHEBI:29105"/>
        <label>1</label>
    </ligand>
</feature>
<feature type="binding site" evidence="1">
    <location>
        <position position="205"/>
    </location>
    <ligand>
        <name>Zn(2+)</name>
        <dbReference type="ChEBI" id="CHEBI:29105"/>
        <label>1</label>
    </ligand>
</feature>
<name>DNAJ_VIBA3</name>
<comment type="function">
    <text evidence="1">Participates actively in the response to hyperosmotic and heat shock by preventing the aggregation of stress-denatured proteins and by disaggregating proteins, also in an autonomous, DnaK-independent fashion. Unfolded proteins bind initially to DnaJ; upon interaction with the DnaJ-bound protein, DnaK hydrolyzes its bound ATP, resulting in the formation of a stable complex. GrpE releases ADP from DnaK; ATP binding to DnaK triggers the release of the substrate protein, thus completing the reaction cycle. Several rounds of ATP-dependent interactions between DnaJ, DnaK and GrpE are required for fully efficient folding. Also involved, together with DnaK and GrpE, in the DNA replication of plasmids through activation of initiation proteins.</text>
</comment>
<comment type="cofactor">
    <cofactor evidence="1">
        <name>Zn(2+)</name>
        <dbReference type="ChEBI" id="CHEBI:29105"/>
    </cofactor>
    <text evidence="1">Binds 2 Zn(2+) ions per monomer.</text>
</comment>
<comment type="subunit">
    <text evidence="1">Homodimer.</text>
</comment>
<comment type="subcellular location">
    <subcellularLocation>
        <location evidence="1">Cytoplasm</location>
    </subcellularLocation>
</comment>
<comment type="domain">
    <text evidence="1">The J domain is necessary and sufficient to stimulate DnaK ATPase activity. Zinc center 1 plays an important role in the autonomous, DnaK-independent chaperone activity of DnaJ. Zinc center 2 is essential for interaction with DnaK and for DnaJ activity.</text>
</comment>
<comment type="similarity">
    <text evidence="1">Belongs to the DnaJ family.</text>
</comment>
<reference key="1">
    <citation type="submission" date="2009-02" db="EMBL/GenBank/DDBJ databases">
        <title>Vibrio splendidus str. LGP32 complete genome.</title>
        <authorList>
            <person name="Mazel D."/>
            <person name="Le Roux F."/>
        </authorList>
    </citation>
    <scope>NUCLEOTIDE SEQUENCE [LARGE SCALE GENOMIC DNA]</scope>
    <source>
        <strain>LGP32</strain>
    </source>
</reference>
<proteinExistence type="inferred from homology"/>
<sequence length="381" mass="41051">MSKRDFYEVLGVSRDASERDIKKAYKRLAMKFHPDRNQGDDSAADKFKEVKVAYEILTDAQKKAAYDQYGHAAFEQGGMGGGGYGGGGQGDFGDIFGDVFGDIFGGGRRGGGQARAQRGSDLRYNMELSLEEAVRGVSKEIEVPTLVECDICDGSGAKAGSSAQTCGTCHGHGQVQMRQGFFAVQQTCPTCNGKGKIIKDPCNSCHGQGRKQKTKTLNVKIPAGVDTGDRIRLSGEGEAGEHGAPAGDLYVQVHVKEHNIFERDGNNLYCEVPVSFSMAALGGEVEVPTLDGRVNLKVPEETQTGRMFRMRGKGVKGVRGGGVGDLIVKLVVETPVKLSSRQKELLREFEETCCGEAASKHKPKSEGFFSGVKNFFDDLTK</sequence>
<evidence type="ECO:0000255" key="1">
    <source>
        <dbReference type="HAMAP-Rule" id="MF_01152"/>
    </source>
</evidence>
<gene>
    <name evidence="1" type="primary">dnaJ</name>
    <name type="ordered locus">VS_0652</name>
</gene>
<accession>B7VJX0</accession>
<keyword id="KW-0143">Chaperone</keyword>
<keyword id="KW-0963">Cytoplasm</keyword>
<keyword id="KW-0235">DNA replication</keyword>
<keyword id="KW-0479">Metal-binding</keyword>
<keyword id="KW-0677">Repeat</keyword>
<keyword id="KW-0346">Stress response</keyword>
<keyword id="KW-0862">Zinc</keyword>
<keyword id="KW-0863">Zinc-finger</keyword>